<keyword id="KW-0997">Cell inner membrane</keyword>
<keyword id="KW-1003">Cell membrane</keyword>
<keyword id="KW-0407">Ion channel</keyword>
<keyword id="KW-0406">Ion transport</keyword>
<keyword id="KW-0472">Membrane</keyword>
<keyword id="KW-0812">Transmembrane</keyword>
<keyword id="KW-1133">Transmembrane helix</keyword>
<keyword id="KW-0813">Transport</keyword>
<sequence>MLKEFKEFALKGNMIDLAIGVIIGGAFGGLVNSIVNDILMPIIGFITGGIDFSNMFIQLAGEKQATLSAAKTAGATISYGNFITLLINFLIIAWVLFLFVKGMNKIRRKQEKEESSKKMSLEEQLLSEIRDLLAKKK</sequence>
<name>MSCL_BARQU</name>
<accession>Q6G160</accession>
<dbReference type="EMBL" id="BX897700">
    <property type="protein sequence ID" value="CAF25789.1"/>
    <property type="molecule type" value="Genomic_DNA"/>
</dbReference>
<dbReference type="RefSeq" id="WP_011179088.1">
    <property type="nucleotide sequence ID" value="NC_005955.1"/>
</dbReference>
<dbReference type="SMR" id="Q6G160"/>
<dbReference type="KEGG" id="bqu:BQ02880"/>
<dbReference type="eggNOG" id="COG1970">
    <property type="taxonomic scope" value="Bacteria"/>
</dbReference>
<dbReference type="HOGENOM" id="CLU_095787_0_1_5"/>
<dbReference type="OrthoDB" id="9810350at2"/>
<dbReference type="Proteomes" id="UP000000597">
    <property type="component" value="Chromosome"/>
</dbReference>
<dbReference type="GO" id="GO:0005886">
    <property type="term" value="C:plasma membrane"/>
    <property type="evidence" value="ECO:0007669"/>
    <property type="project" value="UniProtKB-SubCell"/>
</dbReference>
<dbReference type="GO" id="GO:0008381">
    <property type="term" value="F:mechanosensitive monoatomic ion channel activity"/>
    <property type="evidence" value="ECO:0007669"/>
    <property type="project" value="UniProtKB-UniRule"/>
</dbReference>
<dbReference type="Gene3D" id="1.10.1200.120">
    <property type="entry name" value="Large-conductance mechanosensitive channel, MscL, domain 1"/>
    <property type="match status" value="1"/>
</dbReference>
<dbReference type="HAMAP" id="MF_00115">
    <property type="entry name" value="MscL"/>
    <property type="match status" value="1"/>
</dbReference>
<dbReference type="InterPro" id="IPR019823">
    <property type="entry name" value="Mechanosensitive_channel_CS"/>
</dbReference>
<dbReference type="InterPro" id="IPR001185">
    <property type="entry name" value="MS_channel"/>
</dbReference>
<dbReference type="InterPro" id="IPR037673">
    <property type="entry name" value="MSC/AndL"/>
</dbReference>
<dbReference type="InterPro" id="IPR036019">
    <property type="entry name" value="MscL_channel"/>
</dbReference>
<dbReference type="NCBIfam" id="TIGR00220">
    <property type="entry name" value="mscL"/>
    <property type="match status" value="1"/>
</dbReference>
<dbReference type="NCBIfam" id="NF001843">
    <property type="entry name" value="PRK00567.1-4"/>
    <property type="match status" value="1"/>
</dbReference>
<dbReference type="NCBIfam" id="NF010557">
    <property type="entry name" value="PRK13952.1"/>
    <property type="match status" value="1"/>
</dbReference>
<dbReference type="PANTHER" id="PTHR30266:SF2">
    <property type="entry name" value="LARGE-CONDUCTANCE MECHANOSENSITIVE CHANNEL"/>
    <property type="match status" value="1"/>
</dbReference>
<dbReference type="PANTHER" id="PTHR30266">
    <property type="entry name" value="MECHANOSENSITIVE CHANNEL MSCL"/>
    <property type="match status" value="1"/>
</dbReference>
<dbReference type="Pfam" id="PF01741">
    <property type="entry name" value="MscL"/>
    <property type="match status" value="1"/>
</dbReference>
<dbReference type="PRINTS" id="PR01264">
    <property type="entry name" value="MECHCHANNEL"/>
</dbReference>
<dbReference type="SUPFAM" id="SSF81330">
    <property type="entry name" value="Gated mechanosensitive channel"/>
    <property type="match status" value="1"/>
</dbReference>
<dbReference type="PROSITE" id="PS01327">
    <property type="entry name" value="MSCL"/>
    <property type="match status" value="1"/>
</dbReference>
<reference key="1">
    <citation type="journal article" date="2004" name="Proc. Natl. Acad. Sci. U.S.A.">
        <title>The louse-borne human pathogen Bartonella quintana is a genomic derivative of the zoonotic agent Bartonella henselae.</title>
        <authorList>
            <person name="Alsmark U.C.M."/>
            <person name="Frank A.C."/>
            <person name="Karlberg E.O."/>
            <person name="Legault B.-A."/>
            <person name="Ardell D.H."/>
            <person name="Canbaeck B."/>
            <person name="Eriksson A.-S."/>
            <person name="Naeslund A.K."/>
            <person name="Handley S.A."/>
            <person name="Huvet M."/>
            <person name="La Scola B."/>
            <person name="Holmberg M."/>
            <person name="Andersson S.G.E."/>
        </authorList>
    </citation>
    <scope>NUCLEOTIDE SEQUENCE [LARGE SCALE GENOMIC DNA]</scope>
    <source>
        <strain>Toulouse</strain>
    </source>
</reference>
<evidence type="ECO:0000255" key="1">
    <source>
        <dbReference type="HAMAP-Rule" id="MF_00115"/>
    </source>
</evidence>
<organism>
    <name type="scientific">Bartonella quintana (strain Toulouse)</name>
    <name type="common">Rochalimaea quintana</name>
    <dbReference type="NCBI Taxonomy" id="283165"/>
    <lineage>
        <taxon>Bacteria</taxon>
        <taxon>Pseudomonadati</taxon>
        <taxon>Pseudomonadota</taxon>
        <taxon>Alphaproteobacteria</taxon>
        <taxon>Hyphomicrobiales</taxon>
        <taxon>Bartonellaceae</taxon>
        <taxon>Bartonella</taxon>
    </lineage>
</organism>
<proteinExistence type="inferred from homology"/>
<protein>
    <recommendedName>
        <fullName evidence="1">Large-conductance mechanosensitive channel</fullName>
    </recommendedName>
</protein>
<feature type="chain" id="PRO_0000237979" description="Large-conductance mechanosensitive channel">
    <location>
        <begin position="1"/>
        <end position="137"/>
    </location>
</feature>
<feature type="transmembrane region" description="Helical" evidence="1">
    <location>
        <begin position="15"/>
        <end position="35"/>
    </location>
</feature>
<feature type="transmembrane region" description="Helical" evidence="1">
    <location>
        <begin position="38"/>
        <end position="58"/>
    </location>
</feature>
<feature type="transmembrane region" description="Helical" evidence="1">
    <location>
        <begin position="80"/>
        <end position="100"/>
    </location>
</feature>
<comment type="function">
    <text evidence="1">Channel that opens in response to stretch forces in the membrane lipid bilayer. May participate in the regulation of osmotic pressure changes within the cell.</text>
</comment>
<comment type="subunit">
    <text evidence="1">Homopentamer.</text>
</comment>
<comment type="subcellular location">
    <subcellularLocation>
        <location evidence="1">Cell inner membrane</location>
        <topology evidence="1">Multi-pass membrane protein</topology>
    </subcellularLocation>
</comment>
<comment type="similarity">
    <text evidence="1">Belongs to the MscL family.</text>
</comment>
<gene>
    <name evidence="1" type="primary">mscL</name>
    <name type="ordered locus">BQ02880</name>
</gene>